<gene>
    <name evidence="1" type="primary">sepF</name>
    <name type="ordered locus">lp_2192</name>
</gene>
<feature type="chain" id="PRO_0000334023" description="Cell division protein SepF">
    <location>
        <begin position="1"/>
        <end position="140"/>
    </location>
</feature>
<feature type="region of interest" description="Disordered" evidence="2">
    <location>
        <begin position="15"/>
        <end position="47"/>
    </location>
</feature>
<evidence type="ECO:0000255" key="1">
    <source>
        <dbReference type="HAMAP-Rule" id="MF_01197"/>
    </source>
</evidence>
<evidence type="ECO:0000256" key="2">
    <source>
        <dbReference type="SAM" id="MobiDB-lite"/>
    </source>
</evidence>
<comment type="function">
    <text evidence="1">Cell division protein that is part of the divisome complex and is recruited early to the Z-ring. Probably stimulates Z-ring formation, perhaps through the cross-linking of FtsZ protofilaments. Its function overlaps with FtsA.</text>
</comment>
<comment type="subunit">
    <text evidence="1">Homodimer. Interacts with FtsZ.</text>
</comment>
<comment type="subcellular location">
    <subcellularLocation>
        <location evidence="1">Cytoplasm</location>
    </subcellularLocation>
    <text evidence="1">Localizes to the division site, in a FtsZ-dependent manner.</text>
</comment>
<comment type="similarity">
    <text evidence="1">Belongs to the SepF family.</text>
</comment>
<proteinExistence type="inferred from homology"/>
<organism>
    <name type="scientific">Lactiplantibacillus plantarum (strain ATCC BAA-793 / NCIMB 8826 / WCFS1)</name>
    <name type="common">Lactobacillus plantarum</name>
    <dbReference type="NCBI Taxonomy" id="220668"/>
    <lineage>
        <taxon>Bacteria</taxon>
        <taxon>Bacillati</taxon>
        <taxon>Bacillota</taxon>
        <taxon>Bacilli</taxon>
        <taxon>Lactobacillales</taxon>
        <taxon>Lactobacillaceae</taxon>
        <taxon>Lactiplantibacillus</taxon>
    </lineage>
</organism>
<reference key="1">
    <citation type="journal article" date="2003" name="Proc. Natl. Acad. Sci. U.S.A.">
        <title>Complete genome sequence of Lactobacillus plantarum WCFS1.</title>
        <authorList>
            <person name="Kleerebezem M."/>
            <person name="Boekhorst J."/>
            <person name="van Kranenburg R."/>
            <person name="Molenaar D."/>
            <person name="Kuipers O.P."/>
            <person name="Leer R."/>
            <person name="Tarchini R."/>
            <person name="Peters S.A."/>
            <person name="Sandbrink H.M."/>
            <person name="Fiers M.W.E.J."/>
            <person name="Stiekema W."/>
            <person name="Klein Lankhorst R.M."/>
            <person name="Bron P.A."/>
            <person name="Hoffer S.M."/>
            <person name="Nierop Groot M.N."/>
            <person name="Kerkhoven R."/>
            <person name="De Vries M."/>
            <person name="Ursing B."/>
            <person name="De Vos W.M."/>
            <person name="Siezen R.J."/>
        </authorList>
    </citation>
    <scope>NUCLEOTIDE SEQUENCE [LARGE SCALE GENOMIC DNA]</scope>
    <source>
        <strain>ATCC BAA-793 / NCIMB 8826 / WCFS1</strain>
    </source>
</reference>
<reference key="2">
    <citation type="journal article" date="2012" name="J. Bacteriol.">
        <title>Complete resequencing and reannotation of the Lactobacillus plantarum WCFS1 genome.</title>
        <authorList>
            <person name="Siezen R.J."/>
            <person name="Francke C."/>
            <person name="Renckens B."/>
            <person name="Boekhorst J."/>
            <person name="Wels M."/>
            <person name="Kleerebezem M."/>
            <person name="van Hijum S.A."/>
        </authorList>
    </citation>
    <scope>NUCLEOTIDE SEQUENCE [LARGE SCALE GENOMIC DNA]</scope>
    <scope>GENOME REANNOTATION</scope>
    <source>
        <strain>ATCC BAA-793 / NCIMB 8826 / WCFS1</strain>
    </source>
</reference>
<name>SEPF_LACPL</name>
<sequence>MAGFISNFFGVGDSDSQYEEPTEASQAAAPTESATNTRSTPKVVPMQGGKSVNSKIALFEPKIYSDVKEIATQLLKNQAVIINFDHVDDEMARRIVDFLTGTVFAINGEIERIGDEIFLCIPENYEVSGSTTSQFDTSKL</sequence>
<keyword id="KW-0131">Cell cycle</keyword>
<keyword id="KW-0132">Cell division</keyword>
<keyword id="KW-0963">Cytoplasm</keyword>
<keyword id="KW-1185">Reference proteome</keyword>
<keyword id="KW-0717">Septation</keyword>
<accession>Q88V85</accession>
<accession>F9UQC2</accession>
<dbReference type="EMBL" id="AL935263">
    <property type="protein sequence ID" value="CCC79411.1"/>
    <property type="molecule type" value="Genomic_DNA"/>
</dbReference>
<dbReference type="RefSeq" id="WP_003640853.1">
    <property type="nucleotide sequence ID" value="NC_004567.2"/>
</dbReference>
<dbReference type="RefSeq" id="YP_004889925.1">
    <property type="nucleotide sequence ID" value="NC_004567.2"/>
</dbReference>
<dbReference type="SMR" id="Q88V85"/>
<dbReference type="STRING" id="220668.lp_2192"/>
<dbReference type="EnsemblBacteria" id="CCC79411">
    <property type="protein sequence ID" value="CCC79411"/>
    <property type="gene ID" value="lp_2192"/>
</dbReference>
<dbReference type="KEGG" id="lpl:lp_2192"/>
<dbReference type="PATRIC" id="fig|220668.9.peg.1852"/>
<dbReference type="eggNOG" id="COG1799">
    <property type="taxonomic scope" value="Bacteria"/>
</dbReference>
<dbReference type="HOGENOM" id="CLU_078499_4_1_9"/>
<dbReference type="OrthoDB" id="9815206at2"/>
<dbReference type="PhylomeDB" id="Q88V85"/>
<dbReference type="Proteomes" id="UP000000432">
    <property type="component" value="Chromosome"/>
</dbReference>
<dbReference type="GO" id="GO:0005737">
    <property type="term" value="C:cytoplasm"/>
    <property type="evidence" value="ECO:0007669"/>
    <property type="project" value="UniProtKB-SubCell"/>
</dbReference>
<dbReference type="GO" id="GO:0000917">
    <property type="term" value="P:division septum assembly"/>
    <property type="evidence" value="ECO:0007669"/>
    <property type="project" value="UniProtKB-KW"/>
</dbReference>
<dbReference type="GO" id="GO:0043093">
    <property type="term" value="P:FtsZ-dependent cytokinesis"/>
    <property type="evidence" value="ECO:0007669"/>
    <property type="project" value="UniProtKB-UniRule"/>
</dbReference>
<dbReference type="Gene3D" id="3.30.110.150">
    <property type="entry name" value="SepF-like protein"/>
    <property type="match status" value="1"/>
</dbReference>
<dbReference type="HAMAP" id="MF_01197">
    <property type="entry name" value="SepF"/>
    <property type="match status" value="1"/>
</dbReference>
<dbReference type="InterPro" id="IPR023052">
    <property type="entry name" value="Cell_div_SepF"/>
</dbReference>
<dbReference type="InterPro" id="IPR007561">
    <property type="entry name" value="Cell_div_SepF/SepF-rel"/>
</dbReference>
<dbReference type="InterPro" id="IPR038594">
    <property type="entry name" value="SepF-like_sf"/>
</dbReference>
<dbReference type="PANTHER" id="PTHR35798">
    <property type="entry name" value="CELL DIVISION PROTEIN SEPF"/>
    <property type="match status" value="1"/>
</dbReference>
<dbReference type="PANTHER" id="PTHR35798:SF1">
    <property type="entry name" value="CELL DIVISION PROTEIN SEPF"/>
    <property type="match status" value="1"/>
</dbReference>
<dbReference type="Pfam" id="PF04472">
    <property type="entry name" value="SepF"/>
    <property type="match status" value="1"/>
</dbReference>
<protein>
    <recommendedName>
        <fullName evidence="1">Cell division protein SepF</fullName>
    </recommendedName>
</protein>